<dbReference type="EMBL" id="AE014134">
    <property type="protein sequence ID" value="AAF51484.1"/>
    <property type="molecule type" value="Genomic_DNA"/>
</dbReference>
<dbReference type="EMBL" id="M88475">
    <property type="protein sequence ID" value="AAA28452.1"/>
    <property type="status" value="ALT_FRAME"/>
    <property type="molecule type" value="Genomic_DNA"/>
</dbReference>
<dbReference type="PIR" id="S28823">
    <property type="entry name" value="S28823"/>
</dbReference>
<dbReference type="RefSeq" id="NP_001285547.1">
    <property type="nucleotide sequence ID" value="NM_001298618.1"/>
</dbReference>
<dbReference type="RefSeq" id="NP_001285548.1">
    <property type="nucleotide sequence ID" value="NM_001298619.1"/>
</dbReference>
<dbReference type="RefSeq" id="NP_523445.1">
    <property type="nucleotide sequence ID" value="NM_078721.2"/>
</dbReference>
<dbReference type="SMR" id="P29776"/>
<dbReference type="BioGRID" id="59485">
    <property type="interactions" value="19"/>
</dbReference>
<dbReference type="FunCoup" id="P29776">
    <property type="interactions" value="96"/>
</dbReference>
<dbReference type="IntAct" id="P29776">
    <property type="interactions" value="12"/>
</dbReference>
<dbReference type="STRING" id="7227.FBpp0310465"/>
<dbReference type="GlyGen" id="P29776">
    <property type="glycosylation" value="2 sites"/>
</dbReference>
<dbReference type="PaxDb" id="7227-FBpp0077739"/>
<dbReference type="DNASU" id="33229"/>
<dbReference type="EnsemblMetazoa" id="FBtr0078079">
    <property type="protein sequence ID" value="FBpp0077739"/>
    <property type="gene ID" value="FBgn0005660"/>
</dbReference>
<dbReference type="EnsemblMetazoa" id="FBtr0344014">
    <property type="protein sequence ID" value="FBpp0310465"/>
    <property type="gene ID" value="FBgn0005660"/>
</dbReference>
<dbReference type="EnsemblMetazoa" id="FBtr0345429">
    <property type="protein sequence ID" value="FBpp0311554"/>
    <property type="gene ID" value="FBgn0005660"/>
</dbReference>
<dbReference type="GeneID" id="33229"/>
<dbReference type="KEGG" id="dme:Dmel_CG2914"/>
<dbReference type="AGR" id="FB:FBgn0005660"/>
<dbReference type="CTD" id="33229"/>
<dbReference type="FlyBase" id="FBgn0005660">
    <property type="gene designation" value="Ets21C"/>
</dbReference>
<dbReference type="VEuPathDB" id="VectorBase:FBgn0005660"/>
<dbReference type="eggNOG" id="KOG3806">
    <property type="taxonomic scope" value="Eukaryota"/>
</dbReference>
<dbReference type="GeneTree" id="ENSGT00940000165272"/>
<dbReference type="HOGENOM" id="CLU_042579_0_0_1"/>
<dbReference type="InParanoid" id="P29776"/>
<dbReference type="OMA" id="HAWTTED"/>
<dbReference type="OrthoDB" id="10067219at2759"/>
<dbReference type="PhylomeDB" id="P29776"/>
<dbReference type="Reactome" id="R-DME-2559585">
    <property type="pathway name" value="Oncogene Induced Senescence"/>
</dbReference>
<dbReference type="BioGRID-ORCS" id="33229">
    <property type="hits" value="0 hits in 3 CRISPR screens"/>
</dbReference>
<dbReference type="ChiTaRS" id="Ets21C">
    <property type="organism name" value="fly"/>
</dbReference>
<dbReference type="GenomeRNAi" id="33229"/>
<dbReference type="PRO" id="PR:P29776"/>
<dbReference type="Proteomes" id="UP000000803">
    <property type="component" value="Chromosome 2L"/>
</dbReference>
<dbReference type="Bgee" id="FBgn0005660">
    <property type="expression patterns" value="Expressed in adult abdominal pericardial cell (Drosophila) in dorsal vessel heart and 73 other cell types or tissues"/>
</dbReference>
<dbReference type="ExpressionAtlas" id="P29776">
    <property type="expression patterns" value="baseline and differential"/>
</dbReference>
<dbReference type="GO" id="GO:0005634">
    <property type="term" value="C:nucleus"/>
    <property type="evidence" value="ECO:0000318"/>
    <property type="project" value="GO_Central"/>
</dbReference>
<dbReference type="GO" id="GO:0000981">
    <property type="term" value="F:DNA-binding transcription factor activity, RNA polymerase II-specific"/>
    <property type="evidence" value="ECO:0000318"/>
    <property type="project" value="GO_Central"/>
</dbReference>
<dbReference type="GO" id="GO:0043565">
    <property type="term" value="F:sequence-specific DNA binding"/>
    <property type="evidence" value="ECO:0007669"/>
    <property type="project" value="InterPro"/>
</dbReference>
<dbReference type="GO" id="GO:0030154">
    <property type="term" value="P:cell differentiation"/>
    <property type="evidence" value="ECO:0000318"/>
    <property type="project" value="GO_Central"/>
</dbReference>
<dbReference type="GO" id="GO:0042742">
    <property type="term" value="P:defense response to bacterium"/>
    <property type="evidence" value="ECO:0000315"/>
    <property type="project" value="FlyBase"/>
</dbReference>
<dbReference type="GO" id="GO:0006357">
    <property type="term" value="P:regulation of transcription by RNA polymerase II"/>
    <property type="evidence" value="ECO:0000318"/>
    <property type="project" value="GO_Central"/>
</dbReference>
<dbReference type="CDD" id="cd08203">
    <property type="entry name" value="SAM_PNT"/>
    <property type="match status" value="1"/>
</dbReference>
<dbReference type="FunFam" id="1.10.150.50:FF:000113">
    <property type="entry name" value="DNA-binding protein D-ETS-6"/>
    <property type="match status" value="1"/>
</dbReference>
<dbReference type="FunFam" id="1.10.10.10:FF:000039">
    <property type="entry name" value="Friend leukemia integration 1 transcription factor"/>
    <property type="match status" value="1"/>
</dbReference>
<dbReference type="Gene3D" id="1.10.150.50">
    <property type="entry name" value="Transcription Factor, Ets-1"/>
    <property type="match status" value="1"/>
</dbReference>
<dbReference type="Gene3D" id="1.10.10.10">
    <property type="entry name" value="Winged helix-like DNA-binding domain superfamily/Winged helix DNA-binding domain"/>
    <property type="match status" value="1"/>
</dbReference>
<dbReference type="InterPro" id="IPR000418">
    <property type="entry name" value="Ets_dom"/>
</dbReference>
<dbReference type="InterPro" id="IPR046328">
    <property type="entry name" value="ETS_fam"/>
</dbReference>
<dbReference type="InterPro" id="IPR003118">
    <property type="entry name" value="Pointed_dom"/>
</dbReference>
<dbReference type="InterPro" id="IPR013761">
    <property type="entry name" value="SAM/pointed_sf"/>
</dbReference>
<dbReference type="InterPro" id="IPR036388">
    <property type="entry name" value="WH-like_DNA-bd_sf"/>
</dbReference>
<dbReference type="InterPro" id="IPR036390">
    <property type="entry name" value="WH_DNA-bd_sf"/>
</dbReference>
<dbReference type="PANTHER" id="PTHR11849:SF305">
    <property type="entry name" value="DNA-BINDING PROTEIN D-ETS-6"/>
    <property type="match status" value="1"/>
</dbReference>
<dbReference type="PANTHER" id="PTHR11849">
    <property type="entry name" value="ETS"/>
    <property type="match status" value="1"/>
</dbReference>
<dbReference type="Pfam" id="PF00178">
    <property type="entry name" value="Ets"/>
    <property type="match status" value="1"/>
</dbReference>
<dbReference type="Pfam" id="PF02198">
    <property type="entry name" value="SAM_PNT"/>
    <property type="match status" value="1"/>
</dbReference>
<dbReference type="PRINTS" id="PR00454">
    <property type="entry name" value="ETSDOMAIN"/>
</dbReference>
<dbReference type="SMART" id="SM00413">
    <property type="entry name" value="ETS"/>
    <property type="match status" value="1"/>
</dbReference>
<dbReference type="SMART" id="SM00251">
    <property type="entry name" value="SAM_PNT"/>
    <property type="match status" value="1"/>
</dbReference>
<dbReference type="SUPFAM" id="SSF47769">
    <property type="entry name" value="SAM/Pointed domain"/>
    <property type="match status" value="1"/>
</dbReference>
<dbReference type="SUPFAM" id="SSF46785">
    <property type="entry name" value="Winged helix' DNA-binding domain"/>
    <property type="match status" value="1"/>
</dbReference>
<dbReference type="PROSITE" id="PS00345">
    <property type="entry name" value="ETS_DOMAIN_1"/>
    <property type="match status" value="1"/>
</dbReference>
<dbReference type="PROSITE" id="PS00346">
    <property type="entry name" value="ETS_DOMAIN_2"/>
    <property type="match status" value="1"/>
</dbReference>
<dbReference type="PROSITE" id="PS50061">
    <property type="entry name" value="ETS_DOMAIN_3"/>
    <property type="match status" value="1"/>
</dbReference>
<dbReference type="PROSITE" id="PS51433">
    <property type="entry name" value="PNT"/>
    <property type="match status" value="1"/>
</dbReference>
<feature type="chain" id="PRO_0000204109" description="DNA-binding protein D-ETS-6">
    <location>
        <begin position="1"/>
        <end position="475"/>
    </location>
</feature>
<feature type="domain" description="PNT" evidence="2">
    <location>
        <begin position="132"/>
        <end position="219"/>
    </location>
</feature>
<feature type="DNA-binding region" description="ETS" evidence="1">
    <location>
        <begin position="255"/>
        <end position="335"/>
    </location>
</feature>
<feature type="region of interest" description="Disordered" evidence="3">
    <location>
        <begin position="42"/>
        <end position="150"/>
    </location>
</feature>
<feature type="region of interest" description="Disordered" evidence="3">
    <location>
        <begin position="350"/>
        <end position="475"/>
    </location>
</feature>
<feature type="compositionally biased region" description="Low complexity" evidence="3">
    <location>
        <begin position="70"/>
        <end position="108"/>
    </location>
</feature>
<feature type="compositionally biased region" description="Pro residues" evidence="3">
    <location>
        <begin position="109"/>
        <end position="121"/>
    </location>
</feature>
<feature type="compositionally biased region" description="Low complexity" evidence="3">
    <location>
        <begin position="122"/>
        <end position="144"/>
    </location>
</feature>
<feature type="compositionally biased region" description="Basic residues" evidence="3">
    <location>
        <begin position="375"/>
        <end position="388"/>
    </location>
</feature>
<feature type="compositionally biased region" description="Low complexity" evidence="3">
    <location>
        <begin position="401"/>
        <end position="436"/>
    </location>
</feature>
<feature type="compositionally biased region" description="Polar residues" evidence="3">
    <location>
        <begin position="453"/>
        <end position="475"/>
    </location>
</feature>
<gene>
    <name type="primary">Ets21C</name>
    <name type="synonym">ETS-6</name>
    <name type="ORF">CG2914</name>
</gene>
<name>ETS6_DROME</name>
<comment type="subcellular location">
    <subcellularLocation>
        <location>Nucleus</location>
    </subcellularLocation>
</comment>
<comment type="tissue specificity">
    <text evidence="4">Embryonic ventral nervous system and 1 pair of neurons in each thoracic segment.</text>
</comment>
<comment type="developmental stage">
    <text evidence="4">Expressed throughout development.</text>
</comment>
<comment type="similarity">
    <text evidence="5">Belongs to the ETS family.</text>
</comment>
<comment type="sequence caution" evidence="5">
    <conflict type="frameshift">
        <sequence resource="EMBL-CDS" id="AAA28452"/>
    </conflict>
</comment>
<keyword id="KW-0238">DNA-binding</keyword>
<keyword id="KW-0539">Nucleus</keyword>
<keyword id="KW-1185">Reference proteome</keyword>
<organism>
    <name type="scientific">Drosophila melanogaster</name>
    <name type="common">Fruit fly</name>
    <dbReference type="NCBI Taxonomy" id="7227"/>
    <lineage>
        <taxon>Eukaryota</taxon>
        <taxon>Metazoa</taxon>
        <taxon>Ecdysozoa</taxon>
        <taxon>Arthropoda</taxon>
        <taxon>Hexapoda</taxon>
        <taxon>Insecta</taxon>
        <taxon>Pterygota</taxon>
        <taxon>Neoptera</taxon>
        <taxon>Endopterygota</taxon>
        <taxon>Diptera</taxon>
        <taxon>Brachycera</taxon>
        <taxon>Muscomorpha</taxon>
        <taxon>Ephydroidea</taxon>
        <taxon>Drosophilidae</taxon>
        <taxon>Drosophila</taxon>
        <taxon>Sophophora</taxon>
    </lineage>
</organism>
<evidence type="ECO:0000255" key="1">
    <source>
        <dbReference type="PROSITE-ProRule" id="PRU00237"/>
    </source>
</evidence>
<evidence type="ECO:0000255" key="2">
    <source>
        <dbReference type="PROSITE-ProRule" id="PRU00762"/>
    </source>
</evidence>
<evidence type="ECO:0000256" key="3">
    <source>
        <dbReference type="SAM" id="MobiDB-lite"/>
    </source>
</evidence>
<evidence type="ECO:0000269" key="4">
    <source>
    </source>
</evidence>
<evidence type="ECO:0000305" key="5"/>
<protein>
    <recommendedName>
        <fullName>DNA-binding protein D-ETS-6</fullName>
    </recommendedName>
</protein>
<sequence length="475" mass="51802">MAILQNSRQSHKQLPIISQTIRSAWCQQRPINAMHQDVRQKSIGSGNETKLEAKETEVPTNRRRRRRRCSSSSTSDSSASSYSSTDSDSGSSTSSSSIRSQLPALNLPVPLPLATPTPPAVSSPHQAPSPRRNSSDSNRSVSPVEVPVDPHAWTPEDIASWVRWATRKFKLDPEPDIDRFPKDAQELCDLSRADFWVCAGSRRGGMLLAQHFAISLYHATGRETSPMLNDDEPNPYQLLNAASHRLVAQGSGGQIQLWQFLLELLADSSNANAISWEGQSGEFRLIDPDEVARRWGERKAKPNMNYDKLSRALRYYYDKNIMTKVHGKRYAYKFDFHGLMAACQAQAQGGDPASSMLGSYNHHAGGAMQLGRHPPPLHHHPQHSHPHHQLGQPHFLHPHHSSPASNSSSLGFPSSSTASSQASPGQAPASSSASTSNFTAPFQGGTAGVDPARTSTSSAGNYDQGPVTPTTNAFN</sequence>
<reference key="1">
    <citation type="journal article" date="2000" name="Science">
        <title>The genome sequence of Drosophila melanogaster.</title>
        <authorList>
            <person name="Adams M.D."/>
            <person name="Celniker S.E."/>
            <person name="Holt R.A."/>
            <person name="Evans C.A."/>
            <person name="Gocayne J.D."/>
            <person name="Amanatides P.G."/>
            <person name="Scherer S.E."/>
            <person name="Li P.W."/>
            <person name="Hoskins R.A."/>
            <person name="Galle R.F."/>
            <person name="George R.A."/>
            <person name="Lewis S.E."/>
            <person name="Richards S."/>
            <person name="Ashburner M."/>
            <person name="Henderson S.N."/>
            <person name="Sutton G.G."/>
            <person name="Wortman J.R."/>
            <person name="Yandell M.D."/>
            <person name="Zhang Q."/>
            <person name="Chen L.X."/>
            <person name="Brandon R.C."/>
            <person name="Rogers Y.-H.C."/>
            <person name="Blazej R.G."/>
            <person name="Champe M."/>
            <person name="Pfeiffer B.D."/>
            <person name="Wan K.H."/>
            <person name="Doyle C."/>
            <person name="Baxter E.G."/>
            <person name="Helt G."/>
            <person name="Nelson C.R."/>
            <person name="Miklos G.L.G."/>
            <person name="Abril J.F."/>
            <person name="Agbayani A."/>
            <person name="An H.-J."/>
            <person name="Andrews-Pfannkoch C."/>
            <person name="Baldwin D."/>
            <person name="Ballew R.M."/>
            <person name="Basu A."/>
            <person name="Baxendale J."/>
            <person name="Bayraktaroglu L."/>
            <person name="Beasley E.M."/>
            <person name="Beeson K.Y."/>
            <person name="Benos P.V."/>
            <person name="Berman B.P."/>
            <person name="Bhandari D."/>
            <person name="Bolshakov S."/>
            <person name="Borkova D."/>
            <person name="Botchan M.R."/>
            <person name="Bouck J."/>
            <person name="Brokstein P."/>
            <person name="Brottier P."/>
            <person name="Burtis K.C."/>
            <person name="Busam D.A."/>
            <person name="Butler H."/>
            <person name="Cadieu E."/>
            <person name="Center A."/>
            <person name="Chandra I."/>
            <person name="Cherry J.M."/>
            <person name="Cawley S."/>
            <person name="Dahlke C."/>
            <person name="Davenport L.B."/>
            <person name="Davies P."/>
            <person name="de Pablos B."/>
            <person name="Delcher A."/>
            <person name="Deng Z."/>
            <person name="Mays A.D."/>
            <person name="Dew I."/>
            <person name="Dietz S.M."/>
            <person name="Dodson K."/>
            <person name="Doup L.E."/>
            <person name="Downes M."/>
            <person name="Dugan-Rocha S."/>
            <person name="Dunkov B.C."/>
            <person name="Dunn P."/>
            <person name="Durbin K.J."/>
            <person name="Evangelista C.C."/>
            <person name="Ferraz C."/>
            <person name="Ferriera S."/>
            <person name="Fleischmann W."/>
            <person name="Fosler C."/>
            <person name="Gabrielian A.E."/>
            <person name="Garg N.S."/>
            <person name="Gelbart W.M."/>
            <person name="Glasser K."/>
            <person name="Glodek A."/>
            <person name="Gong F."/>
            <person name="Gorrell J.H."/>
            <person name="Gu Z."/>
            <person name="Guan P."/>
            <person name="Harris M."/>
            <person name="Harris N.L."/>
            <person name="Harvey D.A."/>
            <person name="Heiman T.J."/>
            <person name="Hernandez J.R."/>
            <person name="Houck J."/>
            <person name="Hostin D."/>
            <person name="Houston K.A."/>
            <person name="Howland T.J."/>
            <person name="Wei M.-H."/>
            <person name="Ibegwam C."/>
            <person name="Jalali M."/>
            <person name="Kalush F."/>
            <person name="Karpen G.H."/>
            <person name="Ke Z."/>
            <person name="Kennison J.A."/>
            <person name="Ketchum K.A."/>
            <person name="Kimmel B.E."/>
            <person name="Kodira C.D."/>
            <person name="Kraft C.L."/>
            <person name="Kravitz S."/>
            <person name="Kulp D."/>
            <person name="Lai Z."/>
            <person name="Lasko P."/>
            <person name="Lei Y."/>
            <person name="Levitsky A.A."/>
            <person name="Li J.H."/>
            <person name="Li Z."/>
            <person name="Liang Y."/>
            <person name="Lin X."/>
            <person name="Liu X."/>
            <person name="Mattei B."/>
            <person name="McIntosh T.C."/>
            <person name="McLeod M.P."/>
            <person name="McPherson D."/>
            <person name="Merkulov G."/>
            <person name="Milshina N.V."/>
            <person name="Mobarry C."/>
            <person name="Morris J."/>
            <person name="Moshrefi A."/>
            <person name="Mount S.M."/>
            <person name="Moy M."/>
            <person name="Murphy B."/>
            <person name="Murphy L."/>
            <person name="Muzny D.M."/>
            <person name="Nelson D.L."/>
            <person name="Nelson D.R."/>
            <person name="Nelson K.A."/>
            <person name="Nixon K."/>
            <person name="Nusskern D.R."/>
            <person name="Pacleb J.M."/>
            <person name="Palazzolo M."/>
            <person name="Pittman G.S."/>
            <person name="Pan S."/>
            <person name="Pollard J."/>
            <person name="Puri V."/>
            <person name="Reese M.G."/>
            <person name="Reinert K."/>
            <person name="Remington K."/>
            <person name="Saunders R.D.C."/>
            <person name="Scheeler F."/>
            <person name="Shen H."/>
            <person name="Shue B.C."/>
            <person name="Siden-Kiamos I."/>
            <person name="Simpson M."/>
            <person name="Skupski M.P."/>
            <person name="Smith T.J."/>
            <person name="Spier E."/>
            <person name="Spradling A.C."/>
            <person name="Stapleton M."/>
            <person name="Strong R."/>
            <person name="Sun E."/>
            <person name="Svirskas R."/>
            <person name="Tector C."/>
            <person name="Turner R."/>
            <person name="Venter E."/>
            <person name="Wang A.H."/>
            <person name="Wang X."/>
            <person name="Wang Z.-Y."/>
            <person name="Wassarman D.A."/>
            <person name="Weinstock G.M."/>
            <person name="Weissenbach J."/>
            <person name="Williams S.M."/>
            <person name="Woodage T."/>
            <person name="Worley K.C."/>
            <person name="Wu D."/>
            <person name="Yang S."/>
            <person name="Yao Q.A."/>
            <person name="Ye J."/>
            <person name="Yeh R.-F."/>
            <person name="Zaveri J.S."/>
            <person name="Zhan M."/>
            <person name="Zhang G."/>
            <person name="Zhao Q."/>
            <person name="Zheng L."/>
            <person name="Zheng X.H."/>
            <person name="Zhong F.N."/>
            <person name="Zhong W."/>
            <person name="Zhou X."/>
            <person name="Zhu S.C."/>
            <person name="Zhu X."/>
            <person name="Smith H.O."/>
            <person name="Gibbs R.A."/>
            <person name="Myers E.W."/>
            <person name="Rubin G.M."/>
            <person name="Venter J.C."/>
        </authorList>
    </citation>
    <scope>NUCLEOTIDE SEQUENCE [LARGE SCALE GENOMIC DNA]</scope>
    <source>
        <strain>Berkeley</strain>
    </source>
</reference>
<reference key="2">
    <citation type="journal article" date="2002" name="Genome Biol.">
        <title>Annotation of the Drosophila melanogaster euchromatic genome: a systematic review.</title>
        <authorList>
            <person name="Misra S."/>
            <person name="Crosby M.A."/>
            <person name="Mungall C.J."/>
            <person name="Matthews B.B."/>
            <person name="Campbell K.S."/>
            <person name="Hradecky P."/>
            <person name="Huang Y."/>
            <person name="Kaminker J.S."/>
            <person name="Millburn G.H."/>
            <person name="Prochnik S.E."/>
            <person name="Smith C.D."/>
            <person name="Tupy J.L."/>
            <person name="Whitfield E.J."/>
            <person name="Bayraktaroglu L."/>
            <person name="Berman B.P."/>
            <person name="Bettencourt B.R."/>
            <person name="Celniker S.E."/>
            <person name="de Grey A.D.N.J."/>
            <person name="Drysdale R.A."/>
            <person name="Harris N.L."/>
            <person name="Richter J."/>
            <person name="Russo S."/>
            <person name="Schroeder A.J."/>
            <person name="Shu S.Q."/>
            <person name="Stapleton M."/>
            <person name="Yamada C."/>
            <person name="Ashburner M."/>
            <person name="Gelbart W.M."/>
            <person name="Rubin G.M."/>
            <person name="Lewis S.E."/>
        </authorList>
    </citation>
    <scope>GENOME REANNOTATION</scope>
    <source>
        <strain>Berkeley</strain>
    </source>
</reference>
<reference key="3">
    <citation type="journal article" date="1992" name="Dev. Biol.">
        <title>Isolation and characterization of five Drosophila genes that encode an ets-related DNA binding domain.</title>
        <authorList>
            <person name="Chen T."/>
            <person name="Bunting M."/>
            <person name="Karim F.D."/>
            <person name="Thummel C.S."/>
        </authorList>
    </citation>
    <scope>NUCLEOTIDE SEQUENCE [GENOMIC DNA] OF 235-352</scope>
    <scope>TISSUE SPECIFICITY</scope>
    <scope>DEVELOPMENTAL STAGE</scope>
    <source>
        <strain>Canton-S</strain>
        <tissue>Larva</tissue>
    </source>
</reference>
<accession>P29776</accession>
<accession>Q9VPQ9</accession>
<proteinExistence type="evidence at transcript level"/>